<keyword id="KW-0067">ATP-binding</keyword>
<keyword id="KW-0347">Helicase</keyword>
<keyword id="KW-0378">Hydrolase</keyword>
<keyword id="KW-0496">Mitochondrion</keyword>
<keyword id="KW-0547">Nucleotide-binding</keyword>
<keyword id="KW-1185">Reference proteome</keyword>
<keyword id="KW-0694">RNA-binding</keyword>
<keyword id="KW-0809">Transit peptide</keyword>
<feature type="transit peptide" description="Mitochondrion" evidence="2">
    <location>
        <begin position="1"/>
        <end position="37"/>
    </location>
</feature>
<feature type="chain" id="PRO_0000310260" description="ATP-dependent RNA helicase mrh4, mitochondrial">
    <location>
        <begin position="38"/>
        <end position="615"/>
    </location>
</feature>
<feature type="domain" description="Helicase ATP-binding" evidence="3">
    <location>
        <begin position="184"/>
        <end position="395"/>
    </location>
</feature>
<feature type="domain" description="Helicase C-terminal" evidence="4">
    <location>
        <begin position="444"/>
        <end position="615"/>
    </location>
</feature>
<feature type="region of interest" description="Disordered" evidence="5">
    <location>
        <begin position="21"/>
        <end position="108"/>
    </location>
</feature>
<feature type="short sequence motif" description="Q motif">
    <location>
        <begin position="138"/>
        <end position="171"/>
    </location>
</feature>
<feature type="short sequence motif" description="DEAD box">
    <location>
        <begin position="342"/>
        <end position="345"/>
    </location>
</feature>
<feature type="compositionally biased region" description="Basic and acidic residues" evidence="5">
    <location>
        <begin position="90"/>
        <end position="108"/>
    </location>
</feature>
<feature type="binding site" evidence="3">
    <location>
        <begin position="197"/>
        <end position="204"/>
    </location>
    <ligand>
        <name>ATP</name>
        <dbReference type="ChEBI" id="CHEBI:30616"/>
    </ligand>
</feature>
<protein>
    <recommendedName>
        <fullName>ATP-dependent RNA helicase mrh4, mitochondrial</fullName>
        <ecNumber>3.6.4.13</ecNumber>
    </recommendedName>
</protein>
<dbReference type="EC" id="3.6.4.13"/>
<dbReference type="EMBL" id="CH476634">
    <property type="protein sequence ID" value="EDN93818.1"/>
    <property type="molecule type" value="Genomic_DNA"/>
</dbReference>
<dbReference type="RefSeq" id="XP_001589052.1">
    <property type="nucleotide sequence ID" value="XM_001589002.1"/>
</dbReference>
<dbReference type="SMR" id="A7EWH6"/>
<dbReference type="FunCoup" id="A7EWH6">
    <property type="interactions" value="106"/>
</dbReference>
<dbReference type="STRING" id="665079.A7EWH6"/>
<dbReference type="GeneID" id="5485369"/>
<dbReference type="KEGG" id="ssl:SS1G_09685"/>
<dbReference type="VEuPathDB" id="FungiDB:sscle_01g000610"/>
<dbReference type="InParanoid" id="A7EWH6"/>
<dbReference type="OMA" id="HSTIDFI"/>
<dbReference type="OrthoDB" id="10256233at2759"/>
<dbReference type="Proteomes" id="UP000001312">
    <property type="component" value="Unassembled WGS sequence"/>
</dbReference>
<dbReference type="GO" id="GO:0005739">
    <property type="term" value="C:mitochondrion"/>
    <property type="evidence" value="ECO:0007669"/>
    <property type="project" value="UniProtKB-SubCell"/>
</dbReference>
<dbReference type="GO" id="GO:0005730">
    <property type="term" value="C:nucleolus"/>
    <property type="evidence" value="ECO:0000318"/>
    <property type="project" value="GO_Central"/>
</dbReference>
<dbReference type="GO" id="GO:0005524">
    <property type="term" value="F:ATP binding"/>
    <property type="evidence" value="ECO:0007669"/>
    <property type="project" value="UniProtKB-KW"/>
</dbReference>
<dbReference type="GO" id="GO:0016887">
    <property type="term" value="F:ATP hydrolysis activity"/>
    <property type="evidence" value="ECO:0007669"/>
    <property type="project" value="RHEA"/>
</dbReference>
<dbReference type="GO" id="GO:0003723">
    <property type="term" value="F:RNA binding"/>
    <property type="evidence" value="ECO:0007669"/>
    <property type="project" value="UniProtKB-KW"/>
</dbReference>
<dbReference type="GO" id="GO:0003724">
    <property type="term" value="F:RNA helicase activity"/>
    <property type="evidence" value="ECO:0007669"/>
    <property type="project" value="UniProtKB-EC"/>
</dbReference>
<dbReference type="GO" id="GO:0000463">
    <property type="term" value="P:maturation of LSU-rRNA from tricistronic rRNA transcript (SSU-rRNA, 5.8S rRNA, LSU-rRNA)"/>
    <property type="evidence" value="ECO:0000318"/>
    <property type="project" value="GO_Central"/>
</dbReference>
<dbReference type="Gene3D" id="3.40.50.300">
    <property type="entry name" value="P-loop containing nucleotide triphosphate hydrolases"/>
    <property type="match status" value="2"/>
</dbReference>
<dbReference type="InterPro" id="IPR011545">
    <property type="entry name" value="DEAD/DEAH_box_helicase_dom"/>
</dbReference>
<dbReference type="InterPro" id="IPR014001">
    <property type="entry name" value="Helicase_ATP-bd"/>
</dbReference>
<dbReference type="InterPro" id="IPR001650">
    <property type="entry name" value="Helicase_C-like"/>
</dbReference>
<dbReference type="InterPro" id="IPR027417">
    <property type="entry name" value="P-loop_NTPase"/>
</dbReference>
<dbReference type="PANTHER" id="PTHR47960">
    <property type="entry name" value="DEAD-BOX ATP-DEPENDENT RNA HELICASE 50"/>
    <property type="match status" value="1"/>
</dbReference>
<dbReference type="Pfam" id="PF00270">
    <property type="entry name" value="DEAD"/>
    <property type="match status" value="1"/>
</dbReference>
<dbReference type="Pfam" id="PF00271">
    <property type="entry name" value="Helicase_C"/>
    <property type="match status" value="1"/>
</dbReference>
<dbReference type="SMART" id="SM00487">
    <property type="entry name" value="DEXDc"/>
    <property type="match status" value="1"/>
</dbReference>
<dbReference type="SMART" id="SM00490">
    <property type="entry name" value="HELICc"/>
    <property type="match status" value="1"/>
</dbReference>
<dbReference type="SUPFAM" id="SSF52540">
    <property type="entry name" value="P-loop containing nucleoside triphosphate hydrolases"/>
    <property type="match status" value="1"/>
</dbReference>
<dbReference type="PROSITE" id="PS51192">
    <property type="entry name" value="HELICASE_ATP_BIND_1"/>
    <property type="match status" value="1"/>
</dbReference>
<dbReference type="PROSITE" id="PS51194">
    <property type="entry name" value="HELICASE_CTER"/>
    <property type="match status" value="1"/>
</dbReference>
<dbReference type="PROSITE" id="PS51195">
    <property type="entry name" value="Q_MOTIF"/>
    <property type="match status" value="1"/>
</dbReference>
<name>MRH4_SCLS1</name>
<proteinExistence type="inferred from homology"/>
<accession>A7EWH6</accession>
<reference key="1">
    <citation type="journal article" date="2011" name="PLoS Genet.">
        <title>Genomic analysis of the necrotrophic fungal pathogens Sclerotinia sclerotiorum and Botrytis cinerea.</title>
        <authorList>
            <person name="Amselem J."/>
            <person name="Cuomo C.A."/>
            <person name="van Kan J.A.L."/>
            <person name="Viaud M."/>
            <person name="Benito E.P."/>
            <person name="Couloux A."/>
            <person name="Coutinho P.M."/>
            <person name="de Vries R.P."/>
            <person name="Dyer P.S."/>
            <person name="Fillinger S."/>
            <person name="Fournier E."/>
            <person name="Gout L."/>
            <person name="Hahn M."/>
            <person name="Kohn L."/>
            <person name="Lapalu N."/>
            <person name="Plummer K.M."/>
            <person name="Pradier J.-M."/>
            <person name="Quevillon E."/>
            <person name="Sharon A."/>
            <person name="Simon A."/>
            <person name="ten Have A."/>
            <person name="Tudzynski B."/>
            <person name="Tudzynski P."/>
            <person name="Wincker P."/>
            <person name="Andrew M."/>
            <person name="Anthouard V."/>
            <person name="Beever R.E."/>
            <person name="Beffa R."/>
            <person name="Benoit I."/>
            <person name="Bouzid O."/>
            <person name="Brault B."/>
            <person name="Chen Z."/>
            <person name="Choquer M."/>
            <person name="Collemare J."/>
            <person name="Cotton P."/>
            <person name="Danchin E.G."/>
            <person name="Da Silva C."/>
            <person name="Gautier A."/>
            <person name="Giraud C."/>
            <person name="Giraud T."/>
            <person name="Gonzalez C."/>
            <person name="Grossetete S."/>
            <person name="Gueldener U."/>
            <person name="Henrissat B."/>
            <person name="Howlett B.J."/>
            <person name="Kodira C."/>
            <person name="Kretschmer M."/>
            <person name="Lappartient A."/>
            <person name="Leroch M."/>
            <person name="Levis C."/>
            <person name="Mauceli E."/>
            <person name="Neuveglise C."/>
            <person name="Oeser B."/>
            <person name="Pearson M."/>
            <person name="Poulain J."/>
            <person name="Poussereau N."/>
            <person name="Quesneville H."/>
            <person name="Rascle C."/>
            <person name="Schumacher J."/>
            <person name="Segurens B."/>
            <person name="Sexton A."/>
            <person name="Silva E."/>
            <person name="Sirven C."/>
            <person name="Soanes D.M."/>
            <person name="Talbot N.J."/>
            <person name="Templeton M."/>
            <person name="Yandava C."/>
            <person name="Yarden O."/>
            <person name="Zeng Q."/>
            <person name="Rollins J.A."/>
            <person name="Lebrun M.-H."/>
            <person name="Dickman M."/>
        </authorList>
    </citation>
    <scope>NUCLEOTIDE SEQUENCE [LARGE SCALE GENOMIC DNA]</scope>
    <source>
        <strain>ATCC 18683 / 1980 / Ss-1</strain>
    </source>
</reference>
<gene>
    <name type="primary">mrh4</name>
    <name type="ORF">SS1G_09685</name>
</gene>
<organism>
    <name type="scientific">Sclerotinia sclerotiorum (strain ATCC 18683 / 1980 / Ss-1)</name>
    <name type="common">White mold</name>
    <name type="synonym">Whetzelinia sclerotiorum</name>
    <dbReference type="NCBI Taxonomy" id="665079"/>
    <lineage>
        <taxon>Eukaryota</taxon>
        <taxon>Fungi</taxon>
        <taxon>Dikarya</taxon>
        <taxon>Ascomycota</taxon>
        <taxon>Pezizomycotina</taxon>
        <taxon>Leotiomycetes</taxon>
        <taxon>Helotiales</taxon>
        <taxon>Sclerotiniaceae</taxon>
        <taxon>Sclerotinia</taxon>
    </lineage>
</organism>
<evidence type="ECO:0000250" key="1"/>
<evidence type="ECO:0000255" key="2"/>
<evidence type="ECO:0000255" key="3">
    <source>
        <dbReference type="PROSITE-ProRule" id="PRU00541"/>
    </source>
</evidence>
<evidence type="ECO:0000255" key="4">
    <source>
        <dbReference type="PROSITE-ProRule" id="PRU00542"/>
    </source>
</evidence>
<evidence type="ECO:0000256" key="5">
    <source>
        <dbReference type="SAM" id="MobiDB-lite"/>
    </source>
</evidence>
<evidence type="ECO:0000305" key="6"/>
<sequence length="615" mass="68126">MLRPKAGKCLLCSFRAAQKPVSQKWPSRALSMRTRLPSRPNRMSLAGAGKVSSSPTKEGPARRKQDGPFGGMNLREAKIRGVPERPSAAQERRTSRLDHRDRDDKKDRGFHALKMQSPLAPVSYVRRTDIKGRMNEVQSFEQFALLDSVKQAIFQQALPELKEHVPTPVQRIAVPALLGDQQSRRPKSEMEQYLIAAETGSGKTLSYLIPTINAIKVAEAKDAEVKAYEKELQEEKLRQNNLTLVSPPLSNMPHPTTGRPRAIILVPTSELVTQVGTLLKLFSHTVKFKAAVISSNFSGKVIRNRLFSPSGIDILVSTPHLLSSIADSDPNILSRVTHLIIDEADSLLDRGFSPLTSAIIDRATPSLEKLVLCSATIPRSLDSFLRKRFPDINRLVTPNLHAIPRRVQLGVVDVERDPYRNNKNLACADTIWSIGKAAAEHDGPVKGLMDVKRILVFVNEREKTQEVADYLVSKGVDAIALSRDTPEQRQSEMLASFTSPAKLSVEKPVSHPGSLSDNQPNYVPFGEVAPPVKRRLPNTKVLVTTDLGSRGIDTVAVRHVILYDVPHSTIDFIHRLGRTGRMGRRGRGIVLVGKGDRRDVVKEVREGMFEGKALI</sequence>
<comment type="function">
    <text evidence="1">ATP-binding RNA helicase involved in mitochondrial RNA metabolism. Required for maintenance of mitochondrial DNA (By similarity).</text>
</comment>
<comment type="catalytic activity">
    <reaction>
        <text>ATP + H2O = ADP + phosphate + H(+)</text>
        <dbReference type="Rhea" id="RHEA:13065"/>
        <dbReference type="ChEBI" id="CHEBI:15377"/>
        <dbReference type="ChEBI" id="CHEBI:15378"/>
        <dbReference type="ChEBI" id="CHEBI:30616"/>
        <dbReference type="ChEBI" id="CHEBI:43474"/>
        <dbReference type="ChEBI" id="CHEBI:456216"/>
        <dbReference type="EC" id="3.6.4.13"/>
    </reaction>
</comment>
<comment type="subcellular location">
    <subcellularLocation>
        <location evidence="1">Mitochondrion</location>
    </subcellularLocation>
</comment>
<comment type="domain">
    <text>The Q motif is unique to and characteristic of the DEAD box family of RNA helicases and controls ATP binding and hydrolysis.</text>
</comment>
<comment type="similarity">
    <text evidence="6">Belongs to the DEAD box helicase family. MRH4 subfamily.</text>
</comment>